<reference key="1">
    <citation type="journal article" date="2010" name="J. Bacteriol.">
        <title>The genetic basis of laboratory adaptation in Caulobacter crescentus.</title>
        <authorList>
            <person name="Marks M.E."/>
            <person name="Castro-Rojas C.M."/>
            <person name="Teiling C."/>
            <person name="Du L."/>
            <person name="Kapatral V."/>
            <person name="Walunas T.L."/>
            <person name="Crosson S."/>
        </authorList>
    </citation>
    <scope>NUCLEOTIDE SEQUENCE [LARGE SCALE GENOMIC DNA]</scope>
    <source>
        <strain>NA1000 / CB15N</strain>
    </source>
</reference>
<feature type="chain" id="PRO_1000195535" description="Large ribosomal subunit protein uL10">
    <location>
        <begin position="1"/>
        <end position="172"/>
    </location>
</feature>
<proteinExistence type="inferred from homology"/>
<gene>
    <name evidence="1" type="primary">rplJ</name>
    <name type="ordered locus">CCNA_00530</name>
</gene>
<organism>
    <name type="scientific">Caulobacter vibrioides (strain NA1000 / CB15N)</name>
    <name type="common">Caulobacter crescentus</name>
    <dbReference type="NCBI Taxonomy" id="565050"/>
    <lineage>
        <taxon>Bacteria</taxon>
        <taxon>Pseudomonadati</taxon>
        <taxon>Pseudomonadota</taxon>
        <taxon>Alphaproteobacteria</taxon>
        <taxon>Caulobacterales</taxon>
        <taxon>Caulobacteraceae</taxon>
        <taxon>Caulobacter</taxon>
    </lineage>
</organism>
<accession>B8GZW1</accession>
<protein>
    <recommendedName>
        <fullName evidence="1">Large ribosomal subunit protein uL10</fullName>
    </recommendedName>
    <alternativeName>
        <fullName evidence="2">50S ribosomal protein L10</fullName>
    </alternativeName>
</protein>
<comment type="function">
    <text evidence="1">Forms part of the ribosomal stalk, playing a central role in the interaction of the ribosome with GTP-bound translation factors.</text>
</comment>
<comment type="subunit">
    <text evidence="1">Part of the ribosomal stalk of the 50S ribosomal subunit. The N-terminus interacts with L11 and the large rRNA to form the base of the stalk. The C-terminus forms an elongated spine to which L12 dimers bind in a sequential fashion forming a multimeric L10(L12)X complex.</text>
</comment>
<comment type="similarity">
    <text evidence="1">Belongs to the universal ribosomal protein uL10 family.</text>
</comment>
<dbReference type="EMBL" id="CP001340">
    <property type="protein sequence ID" value="ACL93995.1"/>
    <property type="molecule type" value="Genomic_DNA"/>
</dbReference>
<dbReference type="RefSeq" id="WP_010918384.1">
    <property type="nucleotide sequence ID" value="NC_011916.1"/>
</dbReference>
<dbReference type="RefSeq" id="YP_002515903.1">
    <property type="nucleotide sequence ID" value="NC_011916.1"/>
</dbReference>
<dbReference type="SMR" id="B8GZW1"/>
<dbReference type="GeneID" id="7332220"/>
<dbReference type="KEGG" id="ccs:CCNA_00530"/>
<dbReference type="PATRIC" id="fig|565050.3.peg.522"/>
<dbReference type="HOGENOM" id="CLU_092227_0_0_5"/>
<dbReference type="OrthoDB" id="9791972at2"/>
<dbReference type="PhylomeDB" id="B8GZW1"/>
<dbReference type="Proteomes" id="UP000001364">
    <property type="component" value="Chromosome"/>
</dbReference>
<dbReference type="GO" id="GO:0015934">
    <property type="term" value="C:large ribosomal subunit"/>
    <property type="evidence" value="ECO:0007669"/>
    <property type="project" value="InterPro"/>
</dbReference>
<dbReference type="GO" id="GO:0070180">
    <property type="term" value="F:large ribosomal subunit rRNA binding"/>
    <property type="evidence" value="ECO:0007669"/>
    <property type="project" value="UniProtKB-UniRule"/>
</dbReference>
<dbReference type="GO" id="GO:0003735">
    <property type="term" value="F:structural constituent of ribosome"/>
    <property type="evidence" value="ECO:0007669"/>
    <property type="project" value="InterPro"/>
</dbReference>
<dbReference type="GO" id="GO:0006412">
    <property type="term" value="P:translation"/>
    <property type="evidence" value="ECO:0007669"/>
    <property type="project" value="UniProtKB-UniRule"/>
</dbReference>
<dbReference type="CDD" id="cd05797">
    <property type="entry name" value="Ribosomal_L10"/>
    <property type="match status" value="1"/>
</dbReference>
<dbReference type="Gene3D" id="3.30.70.1730">
    <property type="match status" value="1"/>
</dbReference>
<dbReference type="Gene3D" id="6.10.250.290">
    <property type="match status" value="1"/>
</dbReference>
<dbReference type="HAMAP" id="MF_00362">
    <property type="entry name" value="Ribosomal_uL10"/>
    <property type="match status" value="1"/>
</dbReference>
<dbReference type="InterPro" id="IPR001790">
    <property type="entry name" value="Ribosomal_uL10"/>
</dbReference>
<dbReference type="InterPro" id="IPR043141">
    <property type="entry name" value="Ribosomal_uL10-like_sf"/>
</dbReference>
<dbReference type="InterPro" id="IPR022973">
    <property type="entry name" value="Ribosomal_uL10_bac"/>
</dbReference>
<dbReference type="InterPro" id="IPR047865">
    <property type="entry name" value="Ribosomal_uL10_bac_type"/>
</dbReference>
<dbReference type="InterPro" id="IPR002363">
    <property type="entry name" value="Ribosomal_uL10_CS_bac"/>
</dbReference>
<dbReference type="NCBIfam" id="NF000955">
    <property type="entry name" value="PRK00099.1-1"/>
    <property type="match status" value="1"/>
</dbReference>
<dbReference type="PANTHER" id="PTHR11560">
    <property type="entry name" value="39S RIBOSOMAL PROTEIN L10, MITOCHONDRIAL"/>
    <property type="match status" value="1"/>
</dbReference>
<dbReference type="Pfam" id="PF00466">
    <property type="entry name" value="Ribosomal_L10"/>
    <property type="match status" value="1"/>
</dbReference>
<dbReference type="SUPFAM" id="SSF160369">
    <property type="entry name" value="Ribosomal protein L10-like"/>
    <property type="match status" value="1"/>
</dbReference>
<dbReference type="PROSITE" id="PS01109">
    <property type="entry name" value="RIBOSOMAL_L10"/>
    <property type="match status" value="1"/>
</dbReference>
<evidence type="ECO:0000255" key="1">
    <source>
        <dbReference type="HAMAP-Rule" id="MF_00362"/>
    </source>
</evidence>
<evidence type="ECO:0000305" key="2"/>
<keyword id="KW-1185">Reference proteome</keyword>
<keyword id="KW-0687">Ribonucleoprotein</keyword>
<keyword id="KW-0689">Ribosomal protein</keyword>
<keyword id="KW-0694">RNA-binding</keyword>
<keyword id="KW-0699">rRNA-binding</keyword>
<sequence>MDRAQKQESIESLKSVFADAGAVVVTHYMGLTVAEMTDLRLRLRKEGAAIKVVKNTLALKALDGKLGDKGDKLFTGPVAIAYGPDAVSAAKIAVQFAKENDKLKIVGGVLDQTNVLDEAGVRALATLPSLDELRGKLIGLIQAPATKIAGVLQAPAAQLARVFNAYATKDAA</sequence>
<name>RL10_CAUVN</name>